<gene>
    <name type="primary">iaaM</name>
</gene>
<dbReference type="EC" id="1.13.12.3"/>
<dbReference type="EMBL" id="X56185">
    <property type="protein sequence ID" value="CAA39646.1"/>
    <property type="molecule type" value="Genomic_DNA"/>
</dbReference>
<dbReference type="EMBL" id="U83987">
    <property type="protein sequence ID" value="AAB41874.1"/>
    <property type="molecule type" value="Genomic_DNA"/>
</dbReference>
<dbReference type="SMR" id="P25017"/>
<dbReference type="UniPathway" id="UPA00151"/>
<dbReference type="GO" id="GO:0050361">
    <property type="term" value="F:tryptophan 2-monooxygenase activity"/>
    <property type="evidence" value="ECO:0007669"/>
    <property type="project" value="UniProtKB-EC"/>
</dbReference>
<dbReference type="GO" id="GO:0009851">
    <property type="term" value="P:auxin biosynthetic process"/>
    <property type="evidence" value="ECO:0007669"/>
    <property type="project" value="UniProtKB-UniPathway"/>
</dbReference>
<dbReference type="Gene3D" id="1.10.405.40">
    <property type="match status" value="1"/>
</dbReference>
<dbReference type="Gene3D" id="3.90.660.10">
    <property type="match status" value="1"/>
</dbReference>
<dbReference type="Gene3D" id="3.50.50.60">
    <property type="entry name" value="FAD/NAD(P)-binding domain"/>
    <property type="match status" value="1"/>
</dbReference>
<dbReference type="InterPro" id="IPR002937">
    <property type="entry name" value="Amino_oxidase"/>
</dbReference>
<dbReference type="InterPro" id="IPR036188">
    <property type="entry name" value="FAD/NAD-bd_sf"/>
</dbReference>
<dbReference type="InterPro" id="IPR050281">
    <property type="entry name" value="Flavin_monoamine_oxidase"/>
</dbReference>
<dbReference type="InterPro" id="IPR006064">
    <property type="entry name" value="Glycosidase"/>
</dbReference>
<dbReference type="InterPro" id="IPR012142">
    <property type="entry name" value="Trp_2-mOase"/>
</dbReference>
<dbReference type="PANTHER" id="PTHR10742">
    <property type="entry name" value="FLAVIN MONOAMINE OXIDASE"/>
    <property type="match status" value="1"/>
</dbReference>
<dbReference type="PANTHER" id="PTHR10742:SF410">
    <property type="entry name" value="LYSINE-SPECIFIC HISTONE DEMETHYLASE 2"/>
    <property type="match status" value="1"/>
</dbReference>
<dbReference type="Pfam" id="PF01593">
    <property type="entry name" value="Amino_oxidase"/>
    <property type="match status" value="1"/>
</dbReference>
<dbReference type="Pfam" id="PF02027">
    <property type="entry name" value="RolB_RolC"/>
    <property type="match status" value="1"/>
</dbReference>
<dbReference type="PIRSF" id="PIRSF000319">
    <property type="entry name" value="Trp_2-mono_O2ase"/>
    <property type="match status" value="1"/>
</dbReference>
<dbReference type="PRINTS" id="PR00419">
    <property type="entry name" value="ADXRDTASE"/>
</dbReference>
<dbReference type="SUPFAM" id="SSF54373">
    <property type="entry name" value="FAD-linked reductases, C-terminal domain"/>
    <property type="match status" value="1"/>
</dbReference>
<dbReference type="SUPFAM" id="SSF51905">
    <property type="entry name" value="FAD/NAD(P)-binding domain"/>
    <property type="match status" value="1"/>
</dbReference>
<comment type="catalytic activity">
    <reaction>
        <text>L-tryptophan + O2 = indole-3-acetamide + CO2 + H2O</text>
        <dbReference type="Rhea" id="RHEA:16165"/>
        <dbReference type="ChEBI" id="CHEBI:15377"/>
        <dbReference type="ChEBI" id="CHEBI:15379"/>
        <dbReference type="ChEBI" id="CHEBI:16031"/>
        <dbReference type="ChEBI" id="CHEBI:16526"/>
        <dbReference type="ChEBI" id="CHEBI:57912"/>
        <dbReference type="EC" id="1.13.12.3"/>
    </reaction>
</comment>
<comment type="cofactor">
    <cofactor evidence="1">
        <name>FMN</name>
        <dbReference type="ChEBI" id="CHEBI:58210"/>
    </cofactor>
    <text evidence="1">Binds 1 FMN per subunit.</text>
</comment>
<comment type="pathway">
    <text>Plant hormone metabolism; auxin biosynthesis.</text>
</comment>
<comment type="similarity">
    <text evidence="2">Belongs to the tryptophan 2-monooxygenase family.</text>
</comment>
<comment type="caution">
    <text evidence="2">The plasmid pTiTM4 carries two T-regions, the TA and TB region, both of which have a functional iaaM gene, with low homology between them.</text>
</comment>
<feature type="chain" id="PRO_0000065591" description="Tryptophan 2-monooxygenase">
    <location>
        <begin position="1"/>
        <end position="755"/>
    </location>
</feature>
<feature type="binding site" evidence="1">
    <location>
        <position position="247"/>
    </location>
    <ligand>
        <name>FMN</name>
        <dbReference type="ChEBI" id="CHEBI:58210"/>
    </ligand>
</feature>
<feature type="binding site" evidence="1">
    <location>
        <position position="267"/>
    </location>
    <ligand>
        <name>FMN</name>
        <dbReference type="ChEBI" id="CHEBI:58210"/>
    </ligand>
</feature>
<feature type="binding site" evidence="1">
    <location>
        <position position="275"/>
    </location>
    <ligand>
        <name>FMN</name>
        <dbReference type="ChEBI" id="CHEBI:58210"/>
    </ligand>
</feature>
<feature type="binding site" evidence="1">
    <location>
        <position position="295"/>
    </location>
    <ligand>
        <name>FMN</name>
        <dbReference type="ChEBI" id="CHEBI:58210"/>
    </ligand>
</feature>
<feature type="binding site" evidence="1">
    <location>
        <position position="295"/>
    </location>
    <ligand>
        <name>substrate</name>
    </ligand>
</feature>
<protein>
    <recommendedName>
        <fullName>Tryptophan 2-monooxygenase</fullName>
        <ecNumber>1.13.12.3</ecNumber>
    </recommendedName>
</protein>
<organism>
    <name type="scientific">Agrobacterium vitis</name>
    <name type="common">Rhizobium vitis</name>
    <dbReference type="NCBI Taxonomy" id="373"/>
    <lineage>
        <taxon>Bacteria</taxon>
        <taxon>Pseudomonadati</taxon>
        <taxon>Pseudomonadota</taxon>
        <taxon>Alphaproteobacteria</taxon>
        <taxon>Hyphomicrobiales</taxon>
        <taxon>Rhizobiaceae</taxon>
        <taxon>Rhizobium/Agrobacterium group</taxon>
        <taxon>Agrobacterium</taxon>
    </lineage>
</organism>
<name>TR2M2_AGRVI</name>
<sequence length="755" mass="83973">MSASSLLDKQCDHFSTKIVDLIMVDKADELDRRVAAAFSEREASRERRISQISGECNAGLACKRLADGRFPEISAGQRVAVLSAYIYVGEEILRWILEPEASVRTRVSGLVAIDLAPSCMDISRAQLLQTMNLLSGKRCAPSDLSHFVAISISETARSRTLQMAPYEEGSLKSVTGFTVIIEEAVPFDMVAYGRNLMLKASAGSFPTIDLLYDYRLFLDKCSDSGRIGFFPEDVPRPKVAVIGAGISGLVVASELLHAGVDDVTIYEAGDRVGGKLWSHAFKDAPGVVAEMGAMRFPPAASCLFFFLERYGLSSMRPFPNPGTVDTDLVYEGCRYMWKAGQQPPKLFHRVYSGWHAFLKDGFLEGDIVLASPDAITEALKSGDIRRAHDSWQIWLNRFGRESFSSAIERIFLGTHPPGGETWSFPHDWDLFKLMGIGSGGFGPVFESGFTEILRLVINGYEENQRMCSEGISELPRRIASQVVNGVSVSQRIRHVQVRAIEKEKTKIKIRLKSGISELYDKVVVTSGLANIQLRHCLTCDTTIFRAPVNQAVDNSHMTGSSKLFLLTERKFWFDHMLPSCVLMDGFAKAVYCLDYEPQDPNGKGLVLISYTWEDDSHKLLAVPDKKERLCLLRDAISKSFPVFAQHLVPACADYDQNVVQHDWLTDENAGGRFKLNRRGEDFYSEELFFQALDTTNDTGVYLAGCSCSFTGGWVEGAIQTACNAVCAIIHNCGGILAKDNPLKHPWKRYNYRNRN</sequence>
<accession>P25017</accession>
<proteinExistence type="inferred from homology"/>
<geneLocation type="plasmid">
    <name>pTiTM4</name>
</geneLocation>
<reference key="1">
    <citation type="journal article" date="1991" name="Plant Mol. Biol.">
        <title>Sequence of Agrobacterium tumefaciens biotype III auxin genes.</title>
        <authorList>
            <person name="Bonnard G."/>
            <person name="Vincent F."/>
            <person name="Otten L."/>
        </authorList>
    </citation>
    <scope>NUCLEOTIDE SEQUENCE [GENOMIC DNA]</scope>
    <source>
        <strain>TM4</strain>
    </source>
</reference>
<reference key="2">
    <citation type="submission" date="1997-02" db="EMBL/GenBank/DDBJ databases">
        <authorList>
            <person name="Otten L."/>
            <person name="de Ruffray P."/>
        </authorList>
    </citation>
    <scope>NUCLEOTIDE SEQUENCE [GENOMIC DNA]</scope>
    <source>
        <strain>CG474</strain>
    </source>
</reference>
<evidence type="ECO:0000250" key="1"/>
<evidence type="ECO:0000305" key="2"/>
<keyword id="KW-0073">Auxin biosynthesis</keyword>
<keyword id="KW-0192">Crown gall tumor</keyword>
<keyword id="KW-0285">Flavoprotein</keyword>
<keyword id="KW-0288">FMN</keyword>
<keyword id="KW-0503">Monooxygenase</keyword>
<keyword id="KW-0560">Oxidoreductase</keyword>
<keyword id="KW-0614">Plasmid</keyword>